<protein>
    <recommendedName>
        <fullName>Uncharacterized WD repeat-containing protein DR_2484</fullName>
    </recommendedName>
</protein>
<feature type="chain" id="PRO_0000051522" description="Uncharacterized WD repeat-containing protein DR_2484">
    <location>
        <begin position="1"/>
        <end position="267"/>
    </location>
</feature>
<feature type="repeat" description="WD">
    <location>
        <begin position="50"/>
        <end position="90"/>
    </location>
</feature>
<organism>
    <name type="scientific">Deinococcus radiodurans (strain ATCC 13939 / DSM 20539 / JCM 16871 / CCUG 27074 / LMG 4051 / NBRC 15346 / NCIMB 9279 / VKM B-1422 / R1)</name>
    <dbReference type="NCBI Taxonomy" id="243230"/>
    <lineage>
        <taxon>Bacteria</taxon>
        <taxon>Thermotogati</taxon>
        <taxon>Deinococcota</taxon>
        <taxon>Deinococci</taxon>
        <taxon>Deinococcales</taxon>
        <taxon>Deinococcaceae</taxon>
        <taxon>Deinococcus</taxon>
    </lineage>
</organism>
<name>Y2484_DEIRA</name>
<gene>
    <name type="ordered locus">DR_2484</name>
</gene>
<sequence length="267" mass="29404">MRKTWPLLTLLLCTCASAQLRADIAHNTPPGQATMQVYDGEKVLFQATTPGLNAVTASKFSPDGRWLLNIADGSGYVQLWDTAKGERVKTFLSVYFRIFGADFTPDSERLLLDFSGSKERADPRRPAYFPSPSLWNLATLERISFVYNDKRESFYNGKVTFSQDGERMAFVRPNAYSSGPASVWNAKTGAYIATISRLPYPKGAAQTGGAGAMDARLSPDGQRVLVRYVDNRLAEYDASTGTLLKVRGKFSAADAGAELERFAREGR</sequence>
<accession>Q9RRK5</accession>
<dbReference type="EMBL" id="AE000513">
    <property type="protein sequence ID" value="AAF12020.1"/>
    <property type="molecule type" value="Genomic_DNA"/>
</dbReference>
<dbReference type="PIR" id="E75269">
    <property type="entry name" value="E75269"/>
</dbReference>
<dbReference type="RefSeq" id="NP_296204.1">
    <property type="nucleotide sequence ID" value="NC_001263.1"/>
</dbReference>
<dbReference type="RefSeq" id="WP_010889109.1">
    <property type="nucleotide sequence ID" value="NZ_CP038975.1"/>
</dbReference>
<dbReference type="SMR" id="Q9RRK5"/>
<dbReference type="STRING" id="243230.DR_2484"/>
<dbReference type="PaxDb" id="243230-DR_2484"/>
<dbReference type="EnsemblBacteria" id="AAF12020">
    <property type="protein sequence ID" value="AAF12020"/>
    <property type="gene ID" value="DR_2484"/>
</dbReference>
<dbReference type="KEGG" id="dra:DR_2484"/>
<dbReference type="PATRIC" id="fig|243230.17.peg.2721"/>
<dbReference type="eggNOG" id="COG0823">
    <property type="taxonomic scope" value="Bacteria"/>
</dbReference>
<dbReference type="HOGENOM" id="CLU_1041008_0_0_0"/>
<dbReference type="InParanoid" id="Q9RRK5"/>
<dbReference type="OrthoDB" id="61842at2"/>
<dbReference type="Proteomes" id="UP000002524">
    <property type="component" value="Chromosome 1"/>
</dbReference>
<dbReference type="Gene3D" id="2.130.10.10">
    <property type="entry name" value="YVTN repeat-like/Quinoprotein amine dehydrogenase"/>
    <property type="match status" value="1"/>
</dbReference>
<dbReference type="InterPro" id="IPR011044">
    <property type="entry name" value="Quino_amine_DH_bsu"/>
</dbReference>
<dbReference type="InterPro" id="IPR015943">
    <property type="entry name" value="WD40/YVTN_repeat-like_dom_sf"/>
</dbReference>
<dbReference type="SUPFAM" id="SSF50969">
    <property type="entry name" value="YVTN repeat-like/Quinoprotein amine dehydrogenase"/>
    <property type="match status" value="1"/>
</dbReference>
<reference key="1">
    <citation type="journal article" date="1999" name="Science">
        <title>Genome sequence of the radioresistant bacterium Deinococcus radiodurans R1.</title>
        <authorList>
            <person name="White O."/>
            <person name="Eisen J.A."/>
            <person name="Heidelberg J.F."/>
            <person name="Hickey E.K."/>
            <person name="Peterson J.D."/>
            <person name="Dodson R.J."/>
            <person name="Haft D.H."/>
            <person name="Gwinn M.L."/>
            <person name="Nelson W.C."/>
            <person name="Richardson D.L."/>
            <person name="Moffat K.S."/>
            <person name="Qin H."/>
            <person name="Jiang L."/>
            <person name="Pamphile W."/>
            <person name="Crosby M."/>
            <person name="Shen M."/>
            <person name="Vamathevan J.J."/>
            <person name="Lam P."/>
            <person name="McDonald L.A."/>
            <person name="Utterback T.R."/>
            <person name="Zalewski C."/>
            <person name="Makarova K.S."/>
            <person name="Aravind L."/>
            <person name="Daly M.J."/>
            <person name="Minton K.W."/>
            <person name="Fleischmann R.D."/>
            <person name="Ketchum K.A."/>
            <person name="Nelson K.E."/>
            <person name="Salzberg S.L."/>
            <person name="Smith H.O."/>
            <person name="Venter J.C."/>
            <person name="Fraser C.M."/>
        </authorList>
    </citation>
    <scope>NUCLEOTIDE SEQUENCE [LARGE SCALE GENOMIC DNA]</scope>
    <source>
        <strain>ATCC 13939 / DSM 20539 / JCM 16871 / CCUG 27074 / LMG 4051 / NBRC 15346 / NCIMB 9279 / VKM B-1422 / R1</strain>
    </source>
</reference>
<proteinExistence type="predicted"/>
<keyword id="KW-1185">Reference proteome</keyword>
<keyword id="KW-0853">WD repeat</keyword>